<gene>
    <name evidence="1" type="primary">fabZ</name>
    <name type="ordered locus">Sez_0413</name>
</gene>
<feature type="chain" id="PRO_1000123668" description="3-hydroxyacyl-[acyl-carrier-protein] dehydratase FabZ">
    <location>
        <begin position="1"/>
        <end position="140"/>
    </location>
</feature>
<feature type="active site" evidence="1">
    <location>
        <position position="47"/>
    </location>
</feature>
<organism>
    <name type="scientific">Streptococcus equi subsp. zooepidemicus (strain MGCS10565)</name>
    <dbReference type="NCBI Taxonomy" id="552526"/>
    <lineage>
        <taxon>Bacteria</taxon>
        <taxon>Bacillati</taxon>
        <taxon>Bacillota</taxon>
        <taxon>Bacilli</taxon>
        <taxon>Lactobacillales</taxon>
        <taxon>Streptococcaceae</taxon>
        <taxon>Streptococcus</taxon>
    </lineage>
</organism>
<reference key="1">
    <citation type="journal article" date="2008" name="PLoS ONE">
        <title>Genome sequence of a lancefield group C Streptococcus zooepidemicus strain causing epidemic nephritis: new information about an old disease.</title>
        <authorList>
            <person name="Beres S.B."/>
            <person name="Sesso R."/>
            <person name="Pinto S.W.L."/>
            <person name="Hoe N.P."/>
            <person name="Porcella S.F."/>
            <person name="Deleo F.R."/>
            <person name="Musser J.M."/>
        </authorList>
    </citation>
    <scope>NUCLEOTIDE SEQUENCE [LARGE SCALE GENOMIC DNA]</scope>
    <source>
        <strain>MGCS10565</strain>
    </source>
</reference>
<sequence>MMDIKQIQEALPHRYPMLLVDRILEASDDEIVAIKNVTINEPFFNGHFPQYPVMPGVLIMEALAQTAGVLELSKEENKGKLVFYAGMDKVKFKKQVVPGDQLVMTARFIKRRGTIAVVEAKAEVDGKLAASGTLTFAFGQ</sequence>
<protein>
    <recommendedName>
        <fullName evidence="1">3-hydroxyacyl-[acyl-carrier-protein] dehydratase FabZ</fullName>
        <ecNumber evidence="1">4.2.1.59</ecNumber>
    </recommendedName>
    <alternativeName>
        <fullName evidence="1">(3R)-hydroxymyristoyl-[acyl-carrier-protein] dehydratase</fullName>
        <shortName evidence="1">(3R)-hydroxymyristoyl-ACP dehydrase</shortName>
    </alternativeName>
    <alternativeName>
        <fullName evidence="1">Beta-hydroxyacyl-ACP dehydratase</fullName>
    </alternativeName>
</protein>
<keyword id="KW-0963">Cytoplasm</keyword>
<keyword id="KW-0441">Lipid A biosynthesis</keyword>
<keyword id="KW-0444">Lipid biosynthesis</keyword>
<keyword id="KW-0443">Lipid metabolism</keyword>
<keyword id="KW-0456">Lyase</keyword>
<accession>B4U1C0</accession>
<name>FABZ_STREM</name>
<dbReference type="EC" id="4.2.1.59" evidence="1"/>
<dbReference type="EMBL" id="CP001129">
    <property type="protein sequence ID" value="ACG61787.1"/>
    <property type="molecule type" value="Genomic_DNA"/>
</dbReference>
<dbReference type="RefSeq" id="WP_012515063.1">
    <property type="nucleotide sequence ID" value="NC_011134.1"/>
</dbReference>
<dbReference type="SMR" id="B4U1C0"/>
<dbReference type="GeneID" id="83704294"/>
<dbReference type="KEGG" id="sez:Sez_0413"/>
<dbReference type="HOGENOM" id="CLU_078912_3_0_9"/>
<dbReference type="Proteomes" id="UP000001873">
    <property type="component" value="Chromosome"/>
</dbReference>
<dbReference type="GO" id="GO:0005737">
    <property type="term" value="C:cytoplasm"/>
    <property type="evidence" value="ECO:0007669"/>
    <property type="project" value="UniProtKB-SubCell"/>
</dbReference>
<dbReference type="GO" id="GO:0016020">
    <property type="term" value="C:membrane"/>
    <property type="evidence" value="ECO:0007669"/>
    <property type="project" value="GOC"/>
</dbReference>
<dbReference type="GO" id="GO:0019171">
    <property type="term" value="F:(3R)-hydroxyacyl-[acyl-carrier-protein] dehydratase activity"/>
    <property type="evidence" value="ECO:0007669"/>
    <property type="project" value="UniProtKB-EC"/>
</dbReference>
<dbReference type="GO" id="GO:0006633">
    <property type="term" value="P:fatty acid biosynthetic process"/>
    <property type="evidence" value="ECO:0007669"/>
    <property type="project" value="UniProtKB-UniRule"/>
</dbReference>
<dbReference type="GO" id="GO:0009245">
    <property type="term" value="P:lipid A biosynthetic process"/>
    <property type="evidence" value="ECO:0007669"/>
    <property type="project" value="UniProtKB-UniRule"/>
</dbReference>
<dbReference type="CDD" id="cd01288">
    <property type="entry name" value="FabZ"/>
    <property type="match status" value="1"/>
</dbReference>
<dbReference type="FunFam" id="3.10.129.10:FF:000001">
    <property type="entry name" value="3-hydroxyacyl-[acyl-carrier-protein] dehydratase FabZ"/>
    <property type="match status" value="1"/>
</dbReference>
<dbReference type="Gene3D" id="3.10.129.10">
    <property type="entry name" value="Hotdog Thioesterase"/>
    <property type="match status" value="1"/>
</dbReference>
<dbReference type="HAMAP" id="MF_00406">
    <property type="entry name" value="FabZ"/>
    <property type="match status" value="1"/>
</dbReference>
<dbReference type="InterPro" id="IPR013114">
    <property type="entry name" value="FabA_FabZ"/>
</dbReference>
<dbReference type="InterPro" id="IPR010084">
    <property type="entry name" value="FabZ"/>
</dbReference>
<dbReference type="InterPro" id="IPR029069">
    <property type="entry name" value="HotDog_dom_sf"/>
</dbReference>
<dbReference type="NCBIfam" id="TIGR01750">
    <property type="entry name" value="fabZ"/>
    <property type="match status" value="1"/>
</dbReference>
<dbReference type="NCBIfam" id="NF000582">
    <property type="entry name" value="PRK00006.1"/>
    <property type="match status" value="1"/>
</dbReference>
<dbReference type="PANTHER" id="PTHR30272">
    <property type="entry name" value="3-HYDROXYACYL-[ACYL-CARRIER-PROTEIN] DEHYDRATASE"/>
    <property type="match status" value="1"/>
</dbReference>
<dbReference type="PANTHER" id="PTHR30272:SF1">
    <property type="entry name" value="3-HYDROXYACYL-[ACYL-CARRIER-PROTEIN] DEHYDRATASE"/>
    <property type="match status" value="1"/>
</dbReference>
<dbReference type="Pfam" id="PF07977">
    <property type="entry name" value="FabA"/>
    <property type="match status" value="1"/>
</dbReference>
<dbReference type="SUPFAM" id="SSF54637">
    <property type="entry name" value="Thioesterase/thiol ester dehydrase-isomerase"/>
    <property type="match status" value="1"/>
</dbReference>
<proteinExistence type="inferred from homology"/>
<comment type="function">
    <text evidence="1">Involved in unsaturated fatty acids biosynthesis. Catalyzes the dehydration of short chain beta-hydroxyacyl-ACPs and long chain saturated and unsaturated beta-hydroxyacyl-ACPs.</text>
</comment>
<comment type="catalytic activity">
    <reaction evidence="1">
        <text>a (3R)-hydroxyacyl-[ACP] = a (2E)-enoyl-[ACP] + H2O</text>
        <dbReference type="Rhea" id="RHEA:13097"/>
        <dbReference type="Rhea" id="RHEA-COMP:9925"/>
        <dbReference type="Rhea" id="RHEA-COMP:9945"/>
        <dbReference type="ChEBI" id="CHEBI:15377"/>
        <dbReference type="ChEBI" id="CHEBI:78784"/>
        <dbReference type="ChEBI" id="CHEBI:78827"/>
        <dbReference type="EC" id="4.2.1.59"/>
    </reaction>
</comment>
<comment type="subcellular location">
    <subcellularLocation>
        <location evidence="1">Cytoplasm</location>
    </subcellularLocation>
</comment>
<comment type="similarity">
    <text evidence="1">Belongs to the thioester dehydratase family. FabZ subfamily.</text>
</comment>
<evidence type="ECO:0000255" key="1">
    <source>
        <dbReference type="HAMAP-Rule" id="MF_00406"/>
    </source>
</evidence>